<sequence>MIDKSAFVHPTAIVEEGASIGANAHIGPFCIVGPHVEIGEGTVLKSHVVVNGHTKIGRDNEIYQFASIGEVNQDLKYAGEPTRVEIGDRNRIRESVTIHRGTVQGGGLTKVGSDNLLMINAHIAHDCTVGNRCILANNATLAGHVSVDDFAIIGGMTAVHQFCIIGAHVMVGGCSGVAQDVPPYVIAQGNHATPFGVNIEGLKRRGFSREAITAIRNAYKLIYRSGKTLDEVKPEIAELAETYPEVKAFTDFFARSTRGLIR</sequence>
<gene>
    <name evidence="1" type="primary">lpxA</name>
    <name type="ordered locus">E2348C_0186</name>
</gene>
<name>LPXA_ECO27</name>
<keyword id="KW-0012">Acyltransferase</keyword>
<keyword id="KW-0963">Cytoplasm</keyword>
<keyword id="KW-0441">Lipid A biosynthesis</keyword>
<keyword id="KW-0444">Lipid biosynthesis</keyword>
<keyword id="KW-0443">Lipid metabolism</keyword>
<keyword id="KW-1185">Reference proteome</keyword>
<keyword id="KW-0677">Repeat</keyword>
<keyword id="KW-0808">Transferase</keyword>
<evidence type="ECO:0000255" key="1">
    <source>
        <dbReference type="HAMAP-Rule" id="MF_00387"/>
    </source>
</evidence>
<comment type="function">
    <text evidence="1">Involved in the biosynthesis of lipid A, a phosphorylated glycolipid that anchors the lipopolysaccharide to the outer membrane of the cell.</text>
</comment>
<comment type="catalytic activity">
    <reaction evidence="1">
        <text>a (3R)-hydroxyacyl-[ACP] + UDP-N-acetyl-alpha-D-glucosamine = a UDP-3-O-[(3R)-3-hydroxyacyl]-N-acetyl-alpha-D-glucosamine + holo-[ACP]</text>
        <dbReference type="Rhea" id="RHEA:67812"/>
        <dbReference type="Rhea" id="RHEA-COMP:9685"/>
        <dbReference type="Rhea" id="RHEA-COMP:9945"/>
        <dbReference type="ChEBI" id="CHEBI:57705"/>
        <dbReference type="ChEBI" id="CHEBI:64479"/>
        <dbReference type="ChEBI" id="CHEBI:78827"/>
        <dbReference type="ChEBI" id="CHEBI:173225"/>
        <dbReference type="EC" id="2.3.1.129"/>
    </reaction>
</comment>
<comment type="pathway">
    <text evidence="1">Glycolipid biosynthesis; lipid IV(A) biosynthesis; lipid IV(A) from (3R)-3-hydroxytetradecanoyl-[acyl-carrier-protein] and UDP-N-acetyl-alpha-D-glucosamine: step 1/6.</text>
</comment>
<comment type="subunit">
    <text evidence="1">Homotrimer.</text>
</comment>
<comment type="subcellular location">
    <subcellularLocation>
        <location evidence="1">Cytoplasm</location>
    </subcellularLocation>
</comment>
<comment type="similarity">
    <text evidence="1">Belongs to the transferase hexapeptide repeat family. LpxA subfamily.</text>
</comment>
<proteinExistence type="inferred from homology"/>
<feature type="chain" id="PRO_1000134383" description="Acyl-[acyl-carrier-protein]--UDP-N-acetylglucosamine O-acyltransferase">
    <location>
        <begin position="1"/>
        <end position="262"/>
    </location>
</feature>
<reference key="1">
    <citation type="journal article" date="2009" name="J. Bacteriol.">
        <title>Complete genome sequence and comparative genome analysis of enteropathogenic Escherichia coli O127:H6 strain E2348/69.</title>
        <authorList>
            <person name="Iguchi A."/>
            <person name="Thomson N.R."/>
            <person name="Ogura Y."/>
            <person name="Saunders D."/>
            <person name="Ooka T."/>
            <person name="Henderson I.R."/>
            <person name="Harris D."/>
            <person name="Asadulghani M."/>
            <person name="Kurokawa K."/>
            <person name="Dean P."/>
            <person name="Kenny B."/>
            <person name="Quail M.A."/>
            <person name="Thurston S."/>
            <person name="Dougan G."/>
            <person name="Hayashi T."/>
            <person name="Parkhill J."/>
            <person name="Frankel G."/>
        </authorList>
    </citation>
    <scope>NUCLEOTIDE SEQUENCE [LARGE SCALE GENOMIC DNA]</scope>
    <source>
        <strain>E2348/69 / EPEC</strain>
    </source>
</reference>
<dbReference type="EC" id="2.3.1.129" evidence="1"/>
<dbReference type="EMBL" id="FM180568">
    <property type="protein sequence ID" value="CAS07734.1"/>
    <property type="molecule type" value="Genomic_DNA"/>
</dbReference>
<dbReference type="RefSeq" id="WP_000565966.1">
    <property type="nucleotide sequence ID" value="NC_011601.1"/>
</dbReference>
<dbReference type="SMR" id="B7UJ82"/>
<dbReference type="GeneID" id="93777244"/>
<dbReference type="KEGG" id="ecg:E2348C_0186"/>
<dbReference type="HOGENOM" id="CLU_061249_0_0_6"/>
<dbReference type="UniPathway" id="UPA00359">
    <property type="reaction ID" value="UER00477"/>
</dbReference>
<dbReference type="Proteomes" id="UP000008205">
    <property type="component" value="Chromosome"/>
</dbReference>
<dbReference type="GO" id="GO:0005737">
    <property type="term" value="C:cytoplasm"/>
    <property type="evidence" value="ECO:0007669"/>
    <property type="project" value="UniProtKB-SubCell"/>
</dbReference>
<dbReference type="GO" id="GO:0016020">
    <property type="term" value="C:membrane"/>
    <property type="evidence" value="ECO:0007669"/>
    <property type="project" value="GOC"/>
</dbReference>
<dbReference type="GO" id="GO:0008780">
    <property type="term" value="F:acyl-[acyl-carrier-protein]-UDP-N-acetylglucosamine O-acyltransferase activity"/>
    <property type="evidence" value="ECO:0007669"/>
    <property type="project" value="UniProtKB-UniRule"/>
</dbReference>
<dbReference type="GO" id="GO:0009245">
    <property type="term" value="P:lipid A biosynthetic process"/>
    <property type="evidence" value="ECO:0007669"/>
    <property type="project" value="UniProtKB-UniRule"/>
</dbReference>
<dbReference type="CDD" id="cd03351">
    <property type="entry name" value="LbH_UDP-GlcNAc_AT"/>
    <property type="match status" value="1"/>
</dbReference>
<dbReference type="FunFam" id="1.20.1180.10:FF:000001">
    <property type="entry name" value="Acyl-[acyl-carrier-protein]--UDP-N-acetylglucosamine O-acyltransferase"/>
    <property type="match status" value="1"/>
</dbReference>
<dbReference type="FunFam" id="2.160.10.10:FF:000003">
    <property type="entry name" value="Acyl-[acyl-carrier-protein]--UDP-N-acetylglucosamine O-acyltransferase"/>
    <property type="match status" value="1"/>
</dbReference>
<dbReference type="Gene3D" id="2.160.10.10">
    <property type="entry name" value="Hexapeptide repeat proteins"/>
    <property type="match status" value="1"/>
</dbReference>
<dbReference type="Gene3D" id="1.20.1180.10">
    <property type="entry name" value="Udp N-acetylglucosamine O-acyltransferase, C-terminal domain"/>
    <property type="match status" value="1"/>
</dbReference>
<dbReference type="HAMAP" id="MF_00387">
    <property type="entry name" value="LpxA"/>
    <property type="match status" value="1"/>
</dbReference>
<dbReference type="InterPro" id="IPR029098">
    <property type="entry name" value="Acetyltransf_C"/>
</dbReference>
<dbReference type="InterPro" id="IPR037157">
    <property type="entry name" value="Acetyltransf_C_sf"/>
</dbReference>
<dbReference type="InterPro" id="IPR001451">
    <property type="entry name" value="Hexapep"/>
</dbReference>
<dbReference type="InterPro" id="IPR018357">
    <property type="entry name" value="Hexapep_transf_CS"/>
</dbReference>
<dbReference type="InterPro" id="IPR010137">
    <property type="entry name" value="Lipid_A_LpxA"/>
</dbReference>
<dbReference type="InterPro" id="IPR011004">
    <property type="entry name" value="Trimer_LpxA-like_sf"/>
</dbReference>
<dbReference type="NCBIfam" id="TIGR01852">
    <property type="entry name" value="lipid_A_lpxA"/>
    <property type="match status" value="1"/>
</dbReference>
<dbReference type="NCBIfam" id="NF003657">
    <property type="entry name" value="PRK05289.1"/>
    <property type="match status" value="1"/>
</dbReference>
<dbReference type="PANTHER" id="PTHR43480">
    <property type="entry name" value="ACYL-[ACYL-CARRIER-PROTEIN]--UDP-N-ACETYLGLUCOSAMINE O-ACYLTRANSFERASE"/>
    <property type="match status" value="1"/>
</dbReference>
<dbReference type="PANTHER" id="PTHR43480:SF1">
    <property type="entry name" value="ACYL-[ACYL-CARRIER-PROTEIN]--UDP-N-ACETYLGLUCOSAMINE O-ACYLTRANSFERASE, MITOCHONDRIAL-RELATED"/>
    <property type="match status" value="1"/>
</dbReference>
<dbReference type="Pfam" id="PF13720">
    <property type="entry name" value="Acetyltransf_11"/>
    <property type="match status" value="1"/>
</dbReference>
<dbReference type="Pfam" id="PF00132">
    <property type="entry name" value="Hexapep"/>
    <property type="match status" value="2"/>
</dbReference>
<dbReference type="PIRSF" id="PIRSF000456">
    <property type="entry name" value="UDP-GlcNAc_acltr"/>
    <property type="match status" value="1"/>
</dbReference>
<dbReference type="SUPFAM" id="SSF51161">
    <property type="entry name" value="Trimeric LpxA-like enzymes"/>
    <property type="match status" value="1"/>
</dbReference>
<dbReference type="PROSITE" id="PS00101">
    <property type="entry name" value="HEXAPEP_TRANSFERASES"/>
    <property type="match status" value="2"/>
</dbReference>
<protein>
    <recommendedName>
        <fullName evidence="1">Acyl-[acyl-carrier-protein]--UDP-N-acetylglucosamine O-acyltransferase</fullName>
        <shortName evidence="1">UDP-N-acetylglucosamine acyltransferase</shortName>
        <ecNumber evidence="1">2.3.1.129</ecNumber>
    </recommendedName>
</protein>
<organism>
    <name type="scientific">Escherichia coli O127:H6 (strain E2348/69 / EPEC)</name>
    <dbReference type="NCBI Taxonomy" id="574521"/>
    <lineage>
        <taxon>Bacteria</taxon>
        <taxon>Pseudomonadati</taxon>
        <taxon>Pseudomonadota</taxon>
        <taxon>Gammaproteobacteria</taxon>
        <taxon>Enterobacterales</taxon>
        <taxon>Enterobacteriaceae</taxon>
        <taxon>Escherichia</taxon>
    </lineage>
</organism>
<accession>B7UJ82</accession>